<reference key="1">
    <citation type="journal article" date="2003" name="Proc. Natl. Acad. Sci. U.S.A.">
        <title>The genome sequence of Clostridium tetani, the causative agent of tetanus disease.</title>
        <authorList>
            <person name="Brueggemann H."/>
            <person name="Baeumer S."/>
            <person name="Fricke W.F."/>
            <person name="Wiezer A."/>
            <person name="Liesegang H."/>
            <person name="Decker I."/>
            <person name="Herzberg C."/>
            <person name="Martinez-Arias R."/>
            <person name="Merkl R."/>
            <person name="Henne A."/>
            <person name="Gottschalk G."/>
        </authorList>
    </citation>
    <scope>NUCLEOTIDE SEQUENCE [LARGE SCALE GENOMIC DNA]</scope>
    <source>
        <strain>Massachusetts / E88</strain>
    </source>
</reference>
<sequence>MDFYSLFLIAIALSLDAFGVALCIGLNNNVDLKYKSSCAIYFGFFQFLFAIIGGYAGFLFNKYIATMPQIVGGVVICIVGIIMIKEGIENEDSCKILKPGMNIILGISVSIDAMVVGFTALNKIQSGLLILRDTLFIGIVTLFVSILAFITSKYLKKIDVIGKYADYIGGIILIFFGLKMIFF</sequence>
<accession>Q898D6</accession>
<keyword id="KW-1003">Cell membrane</keyword>
<keyword id="KW-0406">Ion transport</keyword>
<keyword id="KW-0464">Manganese</keyword>
<keyword id="KW-0472">Membrane</keyword>
<keyword id="KW-1185">Reference proteome</keyword>
<keyword id="KW-0812">Transmembrane</keyword>
<keyword id="KW-1133">Transmembrane helix</keyword>
<keyword id="KW-0813">Transport</keyword>
<proteinExistence type="inferred from homology"/>
<name>MNTP_CLOTE</name>
<feature type="chain" id="PRO_0000155644" description="Putative manganese efflux pump MntP">
    <location>
        <begin position="1"/>
        <end position="183"/>
    </location>
</feature>
<feature type="transmembrane region" description="Helical" evidence="1">
    <location>
        <begin position="6"/>
        <end position="26"/>
    </location>
</feature>
<feature type="transmembrane region" description="Helical" evidence="1">
    <location>
        <begin position="40"/>
        <end position="60"/>
    </location>
</feature>
<feature type="transmembrane region" description="Helical" evidence="1">
    <location>
        <begin position="64"/>
        <end position="84"/>
    </location>
</feature>
<feature type="transmembrane region" description="Helical" evidence="1">
    <location>
        <begin position="101"/>
        <end position="121"/>
    </location>
</feature>
<feature type="transmembrane region" description="Helical" evidence="1">
    <location>
        <begin position="135"/>
        <end position="155"/>
    </location>
</feature>
<feature type="transmembrane region" description="Helical" evidence="1">
    <location>
        <begin position="158"/>
        <end position="178"/>
    </location>
</feature>
<evidence type="ECO:0000255" key="1">
    <source>
        <dbReference type="HAMAP-Rule" id="MF_01521"/>
    </source>
</evidence>
<evidence type="ECO:0000305" key="2"/>
<gene>
    <name evidence="1" type="primary">mntP</name>
    <name type="ordered locus">CTC_00526</name>
</gene>
<protein>
    <recommendedName>
        <fullName evidence="1">Putative manganese efflux pump MntP</fullName>
    </recommendedName>
</protein>
<organism>
    <name type="scientific">Clostridium tetani (strain Massachusetts / E88)</name>
    <dbReference type="NCBI Taxonomy" id="212717"/>
    <lineage>
        <taxon>Bacteria</taxon>
        <taxon>Bacillati</taxon>
        <taxon>Bacillota</taxon>
        <taxon>Clostridia</taxon>
        <taxon>Eubacteriales</taxon>
        <taxon>Clostridiaceae</taxon>
        <taxon>Clostridium</taxon>
    </lineage>
</organism>
<dbReference type="EMBL" id="AE015927">
    <property type="protein sequence ID" value="AAO35147.1"/>
    <property type="status" value="ALT_INIT"/>
    <property type="molecule type" value="Genomic_DNA"/>
</dbReference>
<dbReference type="RefSeq" id="WP_035111146.1">
    <property type="nucleotide sequence ID" value="NC_004557.1"/>
</dbReference>
<dbReference type="STRING" id="212717.CTC_00526"/>
<dbReference type="GeneID" id="24254689"/>
<dbReference type="KEGG" id="ctc:CTC_00526"/>
<dbReference type="HOGENOM" id="CLU_096410_3_0_9"/>
<dbReference type="OrthoDB" id="1679700at2"/>
<dbReference type="Proteomes" id="UP000001412">
    <property type="component" value="Chromosome"/>
</dbReference>
<dbReference type="GO" id="GO:0005886">
    <property type="term" value="C:plasma membrane"/>
    <property type="evidence" value="ECO:0007669"/>
    <property type="project" value="UniProtKB-SubCell"/>
</dbReference>
<dbReference type="GO" id="GO:0005384">
    <property type="term" value="F:manganese ion transmembrane transporter activity"/>
    <property type="evidence" value="ECO:0007669"/>
    <property type="project" value="UniProtKB-UniRule"/>
</dbReference>
<dbReference type="HAMAP" id="MF_01521">
    <property type="entry name" value="MntP_pump"/>
    <property type="match status" value="1"/>
</dbReference>
<dbReference type="InterPro" id="IPR003810">
    <property type="entry name" value="Mntp/YtaF"/>
</dbReference>
<dbReference type="InterPro" id="IPR022929">
    <property type="entry name" value="Put_MntP"/>
</dbReference>
<dbReference type="PANTHER" id="PTHR35529">
    <property type="entry name" value="MANGANESE EFFLUX PUMP MNTP-RELATED"/>
    <property type="match status" value="1"/>
</dbReference>
<dbReference type="PANTHER" id="PTHR35529:SF1">
    <property type="entry name" value="MANGANESE EFFLUX PUMP MNTP-RELATED"/>
    <property type="match status" value="1"/>
</dbReference>
<dbReference type="Pfam" id="PF02659">
    <property type="entry name" value="Mntp"/>
    <property type="match status" value="1"/>
</dbReference>
<comment type="function">
    <text evidence="1">Probably functions as a manganese efflux pump.</text>
</comment>
<comment type="subcellular location">
    <subcellularLocation>
        <location evidence="1">Cell membrane</location>
        <topology evidence="1">Multi-pass membrane protein</topology>
    </subcellularLocation>
</comment>
<comment type="similarity">
    <text evidence="1">Belongs to the MntP (TC 9.B.29) family.</text>
</comment>
<comment type="sequence caution" evidence="2">
    <conflict type="erroneous initiation">
        <sequence resource="EMBL-CDS" id="AAO35147"/>
    </conflict>
</comment>